<accession>Q10414</accession>
<keyword id="KW-0469">Meiosis</keyword>
<keyword id="KW-0539">Nucleus</keyword>
<keyword id="KW-0597">Phosphoprotein</keyword>
<keyword id="KW-1185">Reference proteome</keyword>
<organism>
    <name type="scientific">Schizosaccharomyces pombe (strain 972 / ATCC 24843)</name>
    <name type="common">Fission yeast</name>
    <dbReference type="NCBI Taxonomy" id="284812"/>
    <lineage>
        <taxon>Eukaryota</taxon>
        <taxon>Fungi</taxon>
        <taxon>Dikarya</taxon>
        <taxon>Ascomycota</taxon>
        <taxon>Taphrinomycotina</taxon>
        <taxon>Schizosaccharomycetes</taxon>
        <taxon>Schizosaccharomycetales</taxon>
        <taxon>Schizosaccharomycetaceae</taxon>
        <taxon>Schizosaccharomyces</taxon>
    </lineage>
</organism>
<comment type="function">
    <text evidence="2">Has a role in meiosis.</text>
</comment>
<comment type="subcellular location">
    <subcellularLocation>
        <location evidence="3">Nucleus</location>
    </subcellularLocation>
</comment>
<comment type="similarity">
    <text evidence="5">Belongs to the CWF19 family.</text>
</comment>
<protein>
    <recommendedName>
        <fullName>CWF19-like protein mug161</fullName>
    </recommendedName>
    <alternativeName>
        <fullName>Meiotically up-regulated gene 161 protein</fullName>
    </alternativeName>
</protein>
<reference key="1">
    <citation type="journal article" date="2002" name="Nature">
        <title>The genome sequence of Schizosaccharomyces pombe.</title>
        <authorList>
            <person name="Wood V."/>
            <person name="Gwilliam R."/>
            <person name="Rajandream M.A."/>
            <person name="Lyne M.H."/>
            <person name="Lyne R."/>
            <person name="Stewart A."/>
            <person name="Sgouros J.G."/>
            <person name="Peat N."/>
            <person name="Hayles J."/>
            <person name="Baker S.G."/>
            <person name="Basham D."/>
            <person name="Bowman S."/>
            <person name="Brooks K."/>
            <person name="Brown D."/>
            <person name="Brown S."/>
            <person name="Chillingworth T."/>
            <person name="Churcher C.M."/>
            <person name="Collins M."/>
            <person name="Connor R."/>
            <person name="Cronin A."/>
            <person name="Davis P."/>
            <person name="Feltwell T."/>
            <person name="Fraser A."/>
            <person name="Gentles S."/>
            <person name="Goble A."/>
            <person name="Hamlin N."/>
            <person name="Harris D.E."/>
            <person name="Hidalgo J."/>
            <person name="Hodgson G."/>
            <person name="Holroyd S."/>
            <person name="Hornsby T."/>
            <person name="Howarth S."/>
            <person name="Huckle E.J."/>
            <person name="Hunt S."/>
            <person name="Jagels K."/>
            <person name="James K.D."/>
            <person name="Jones L."/>
            <person name="Jones M."/>
            <person name="Leather S."/>
            <person name="McDonald S."/>
            <person name="McLean J."/>
            <person name="Mooney P."/>
            <person name="Moule S."/>
            <person name="Mungall K.L."/>
            <person name="Murphy L.D."/>
            <person name="Niblett D."/>
            <person name="Odell C."/>
            <person name="Oliver K."/>
            <person name="O'Neil S."/>
            <person name="Pearson D."/>
            <person name="Quail M.A."/>
            <person name="Rabbinowitsch E."/>
            <person name="Rutherford K.M."/>
            <person name="Rutter S."/>
            <person name="Saunders D."/>
            <person name="Seeger K."/>
            <person name="Sharp S."/>
            <person name="Skelton J."/>
            <person name="Simmonds M.N."/>
            <person name="Squares R."/>
            <person name="Squares S."/>
            <person name="Stevens K."/>
            <person name="Taylor K."/>
            <person name="Taylor R.G."/>
            <person name="Tivey A."/>
            <person name="Walsh S.V."/>
            <person name="Warren T."/>
            <person name="Whitehead S."/>
            <person name="Woodward J.R."/>
            <person name="Volckaert G."/>
            <person name="Aert R."/>
            <person name="Robben J."/>
            <person name="Grymonprez B."/>
            <person name="Weltjens I."/>
            <person name="Vanstreels E."/>
            <person name="Rieger M."/>
            <person name="Schaefer M."/>
            <person name="Mueller-Auer S."/>
            <person name="Gabel C."/>
            <person name="Fuchs M."/>
            <person name="Duesterhoeft A."/>
            <person name="Fritzc C."/>
            <person name="Holzer E."/>
            <person name="Moestl D."/>
            <person name="Hilbert H."/>
            <person name="Borzym K."/>
            <person name="Langer I."/>
            <person name="Beck A."/>
            <person name="Lehrach H."/>
            <person name="Reinhardt R."/>
            <person name="Pohl T.M."/>
            <person name="Eger P."/>
            <person name="Zimmermann W."/>
            <person name="Wedler H."/>
            <person name="Wambutt R."/>
            <person name="Purnelle B."/>
            <person name="Goffeau A."/>
            <person name="Cadieu E."/>
            <person name="Dreano S."/>
            <person name="Gloux S."/>
            <person name="Lelaure V."/>
            <person name="Mottier S."/>
            <person name="Galibert F."/>
            <person name="Aves S.J."/>
            <person name="Xiang Z."/>
            <person name="Hunt C."/>
            <person name="Moore K."/>
            <person name="Hurst S.M."/>
            <person name="Lucas M."/>
            <person name="Rochet M."/>
            <person name="Gaillardin C."/>
            <person name="Tallada V.A."/>
            <person name="Garzon A."/>
            <person name="Thode G."/>
            <person name="Daga R.R."/>
            <person name="Cruzado L."/>
            <person name="Jimenez J."/>
            <person name="Sanchez M."/>
            <person name="del Rey F."/>
            <person name="Benito J."/>
            <person name="Dominguez A."/>
            <person name="Revuelta J.L."/>
            <person name="Moreno S."/>
            <person name="Armstrong J."/>
            <person name="Forsburg S.L."/>
            <person name="Cerutti L."/>
            <person name="Lowe T."/>
            <person name="McCombie W.R."/>
            <person name="Paulsen I."/>
            <person name="Potashkin J."/>
            <person name="Shpakovski G.V."/>
            <person name="Ussery D."/>
            <person name="Barrell B.G."/>
            <person name="Nurse P."/>
        </authorList>
    </citation>
    <scope>NUCLEOTIDE SEQUENCE [LARGE SCALE GENOMIC DNA]</scope>
    <source>
        <strain>972 / ATCC 24843</strain>
    </source>
</reference>
<reference key="2">
    <citation type="journal article" date="2005" name="Curr. Biol.">
        <title>A large-scale screen in S. pombe identifies seven novel genes required for critical meiotic events.</title>
        <authorList>
            <person name="Martin-Castellanos C."/>
            <person name="Blanco M."/>
            <person name="Rozalen A.E."/>
            <person name="Perez-Hidalgo L."/>
            <person name="Garcia A.I."/>
            <person name="Conde F."/>
            <person name="Mata J."/>
            <person name="Ellermeier C."/>
            <person name="Davis L."/>
            <person name="San-Segundo P."/>
            <person name="Smith G.R."/>
            <person name="Moreno S."/>
        </authorList>
    </citation>
    <scope>FUNCTION IN MEIOSIS</scope>
</reference>
<reference key="3">
    <citation type="journal article" date="2006" name="Nat. Biotechnol.">
        <title>ORFeome cloning and global analysis of protein localization in the fission yeast Schizosaccharomyces pombe.</title>
        <authorList>
            <person name="Matsuyama A."/>
            <person name="Arai R."/>
            <person name="Yashiroda Y."/>
            <person name="Shirai A."/>
            <person name="Kamata A."/>
            <person name="Sekido S."/>
            <person name="Kobayashi Y."/>
            <person name="Hashimoto A."/>
            <person name="Hamamoto M."/>
            <person name="Hiraoka Y."/>
            <person name="Horinouchi S."/>
            <person name="Yoshida M."/>
        </authorList>
    </citation>
    <scope>SUBCELLULAR LOCATION [LARGE SCALE ANALYSIS]</scope>
</reference>
<reference key="4">
    <citation type="journal article" date="2008" name="J. Proteome Res.">
        <title>Phosphoproteome analysis of fission yeast.</title>
        <authorList>
            <person name="Wilson-Grady J.T."/>
            <person name="Villen J."/>
            <person name="Gygi S.P."/>
        </authorList>
    </citation>
    <scope>PHOSPHORYLATION [LARGE SCALE ANALYSIS] AT SER-296; THR-298; SER-317; SER-319; SER-331 AND SER-334</scope>
    <scope>IDENTIFICATION BY MASS SPECTROMETRY</scope>
</reference>
<name>MU161_SCHPO</name>
<sequence length="561" mass="63216">MIFYDKLKPADVLVIGSADGRVIEAIEYIADLHKQHGFKFAICLGNLFSHKRTTSADVVKLKNEKVKVPIPVYFGVGTAGLPESIISHMAMYGPEVAPNLFCMGICGFMKTFYKFTIAQLGGSYNEEKYYQPPEKFEQSLNEKCFHRSDVQKLSKRCDILFSSEWPEDVQENSTLPERKLPKGCMPLAALAANCMPQYFFVPGPVYYEREPYKNSAAINVNTGTVTHFVALAPFKNSKNEKFSYAFTLYPLTTEYMQPAPPNCTASPFEHRPIPLKRASEDQIIPQQTNKFHKSKSSTALFKSKKDSSSSLNKMHKSESHSALNNLHKSESGTSLNNRRSKVGPGSCFFCLSNPNVALHLIVAIGNEAYMALPKGPLTTTASNTPALASSGHVLIIPIAHASALSTLSDTSYEKTLNEMNRFRKAVTDMYNACDSDALVYEISRANGVHLHWQMIPIPKISSHRIESVFLEMAKEAGYDFEERDVEPHELNYFRVFLPSGKILIHRLQLRERFDLQFGRRAAAKILGLEDRVDWRKCVQTEDEEKAESEAFKMCFKPYDFT</sequence>
<gene>
    <name type="primary">mug161</name>
    <name type="ORF">SPAC1F3.09</name>
</gene>
<evidence type="ECO:0000256" key="1">
    <source>
        <dbReference type="SAM" id="MobiDB-lite"/>
    </source>
</evidence>
<evidence type="ECO:0000269" key="2">
    <source>
    </source>
</evidence>
<evidence type="ECO:0000269" key="3">
    <source>
    </source>
</evidence>
<evidence type="ECO:0000269" key="4">
    <source>
    </source>
</evidence>
<evidence type="ECO:0000305" key="5"/>
<feature type="chain" id="PRO_0000116599" description="CWF19-like protein mug161">
    <location>
        <begin position="1"/>
        <end position="561"/>
    </location>
</feature>
<feature type="region of interest" description="Disordered" evidence="1">
    <location>
        <begin position="286"/>
        <end position="338"/>
    </location>
</feature>
<feature type="compositionally biased region" description="Polar residues" evidence="1">
    <location>
        <begin position="320"/>
        <end position="337"/>
    </location>
</feature>
<feature type="modified residue" description="Phosphoserine" evidence="4">
    <location>
        <position position="296"/>
    </location>
</feature>
<feature type="modified residue" description="Phosphothreonine" evidence="4">
    <location>
        <position position="298"/>
    </location>
</feature>
<feature type="modified residue" description="Phosphoserine" evidence="4">
    <location>
        <position position="317"/>
    </location>
</feature>
<feature type="modified residue" description="Phosphoserine" evidence="4">
    <location>
        <position position="319"/>
    </location>
</feature>
<feature type="modified residue" description="Phosphoserine" evidence="4">
    <location>
        <position position="331"/>
    </location>
</feature>
<feature type="modified residue" description="Phosphoserine" evidence="4">
    <location>
        <position position="334"/>
    </location>
</feature>
<proteinExistence type="evidence at protein level"/>
<dbReference type="EMBL" id="CU329670">
    <property type="protein sequence ID" value="CAA94627.1"/>
    <property type="molecule type" value="Genomic_DNA"/>
</dbReference>
<dbReference type="PIR" id="T38080">
    <property type="entry name" value="T38080"/>
</dbReference>
<dbReference type="RefSeq" id="NP_593012.1">
    <property type="nucleotide sequence ID" value="NM_001018411.2"/>
</dbReference>
<dbReference type="SMR" id="Q10414"/>
<dbReference type="BioGRID" id="277963">
    <property type="interactions" value="16"/>
</dbReference>
<dbReference type="FunCoup" id="Q10414">
    <property type="interactions" value="1099"/>
</dbReference>
<dbReference type="STRING" id="284812.Q10414"/>
<dbReference type="iPTMnet" id="Q10414"/>
<dbReference type="PaxDb" id="4896-SPAC1F3.09.1"/>
<dbReference type="EnsemblFungi" id="SPAC1F3.09.1">
    <property type="protein sequence ID" value="SPAC1F3.09.1:pep"/>
    <property type="gene ID" value="SPAC1F3.09"/>
</dbReference>
<dbReference type="GeneID" id="2541461"/>
<dbReference type="KEGG" id="spo:2541461"/>
<dbReference type="PomBase" id="SPAC1F3.09">
    <property type="gene designation" value="mug161"/>
</dbReference>
<dbReference type="VEuPathDB" id="FungiDB:SPAC1F3.09"/>
<dbReference type="eggNOG" id="KOG2476">
    <property type="taxonomic scope" value="Eukaryota"/>
</dbReference>
<dbReference type="HOGENOM" id="CLU_019955_2_0_1"/>
<dbReference type="InParanoid" id="Q10414"/>
<dbReference type="OMA" id="IVPITHY"/>
<dbReference type="PhylomeDB" id="Q10414"/>
<dbReference type="PRO" id="PR:Q10414"/>
<dbReference type="Proteomes" id="UP000002485">
    <property type="component" value="Chromosome I"/>
</dbReference>
<dbReference type="GO" id="GO:0005634">
    <property type="term" value="C:nucleus"/>
    <property type="evidence" value="ECO:0007005"/>
    <property type="project" value="PomBase"/>
</dbReference>
<dbReference type="GO" id="GO:0071014">
    <property type="term" value="C:post-mRNA release spliceosomal complex"/>
    <property type="evidence" value="ECO:0000314"/>
    <property type="project" value="PomBase"/>
</dbReference>
<dbReference type="GO" id="GO:0000974">
    <property type="term" value="C:Prp19 complex"/>
    <property type="evidence" value="ECO:0000314"/>
    <property type="project" value="PomBase"/>
</dbReference>
<dbReference type="GO" id="GO:0061632">
    <property type="term" value="F:RNA lariat debranching enzyme activator activity"/>
    <property type="evidence" value="ECO:0000318"/>
    <property type="project" value="GO_Central"/>
</dbReference>
<dbReference type="GO" id="GO:0051321">
    <property type="term" value="P:meiotic cell cycle"/>
    <property type="evidence" value="ECO:0007669"/>
    <property type="project" value="UniProtKB-KW"/>
</dbReference>
<dbReference type="GO" id="GO:0045292">
    <property type="term" value="P:mRNA cis splicing, via spliceosome"/>
    <property type="evidence" value="ECO:0000269"/>
    <property type="project" value="PomBase"/>
</dbReference>
<dbReference type="GO" id="GO:0000398">
    <property type="term" value="P:mRNA splicing, via spliceosome"/>
    <property type="evidence" value="ECO:0000318"/>
    <property type="project" value="GO_Central"/>
</dbReference>
<dbReference type="CDD" id="cd07380">
    <property type="entry name" value="MPP_CWF19_N"/>
    <property type="match status" value="1"/>
</dbReference>
<dbReference type="FunFam" id="3.30.428.10:FF:000050">
    <property type="entry name" value="CWF19-like protein mug161"/>
    <property type="match status" value="1"/>
</dbReference>
<dbReference type="Gene3D" id="3.30.428.10">
    <property type="entry name" value="HIT-like"/>
    <property type="match status" value="1"/>
</dbReference>
<dbReference type="InterPro" id="IPR040194">
    <property type="entry name" value="Cwf19-like"/>
</dbReference>
<dbReference type="InterPro" id="IPR006768">
    <property type="entry name" value="Cwf19-like_C_dom-1"/>
</dbReference>
<dbReference type="InterPro" id="IPR006767">
    <property type="entry name" value="Cwf19-like_C_dom-2"/>
</dbReference>
<dbReference type="InterPro" id="IPR036265">
    <property type="entry name" value="HIT-like_sf"/>
</dbReference>
<dbReference type="PANTHER" id="PTHR12072">
    <property type="entry name" value="CWF19, CELL CYCLE CONTROL PROTEIN"/>
    <property type="match status" value="1"/>
</dbReference>
<dbReference type="PANTHER" id="PTHR12072:SF4">
    <property type="entry name" value="CWF19-LIKE PROTEIN 1"/>
    <property type="match status" value="1"/>
</dbReference>
<dbReference type="Pfam" id="PF04677">
    <property type="entry name" value="CwfJ_C_1"/>
    <property type="match status" value="1"/>
</dbReference>
<dbReference type="Pfam" id="PF04676">
    <property type="entry name" value="CwfJ_C_2"/>
    <property type="match status" value="1"/>
</dbReference>
<dbReference type="SUPFAM" id="SSF54197">
    <property type="entry name" value="HIT-like"/>
    <property type="match status" value="1"/>
</dbReference>